<name>APC14_SCHPO</name>
<feature type="chain" id="PRO_0000058047" description="Anaphase-promoting complex subunit 14">
    <location>
        <begin position="1"/>
        <end position="107"/>
    </location>
</feature>
<protein>
    <recommendedName>
        <fullName>Anaphase-promoting complex subunit 14</fullName>
    </recommendedName>
    <alternativeName>
        <fullName>20S cyclosome/APC complex protein apc14</fullName>
    </alternativeName>
    <alternativeName>
        <fullName>Overlapping meiotic transcript protein 1</fullName>
    </alternativeName>
</protein>
<evidence type="ECO:0000269" key="1">
    <source>
    </source>
</evidence>
<evidence type="ECO:0000269" key="2">
    <source>
    </source>
</evidence>
<evidence type="ECO:0000303" key="3">
    <source>
    </source>
</evidence>
<evidence type="ECO:0000312" key="4">
    <source>
        <dbReference type="PomBase" id="SPAC27D7.05c"/>
    </source>
</evidence>
<gene>
    <name evidence="4" type="primary">apc14</name>
    <name evidence="3" type="synonym">omt1</name>
    <name evidence="4" type="ORF">SPAC27D7.05c</name>
</gene>
<comment type="function">
    <text evidence="1 2">Component of the anaphase promoting complex/cyclosome (APC/C), a cell cycle-regulated E3 ubiquitin-protein ligase complex that controls progression through mitosis and the G1 phase of the cell cycle. The APC/C is thought to confer substrate specificity and, in the presence of ubiquitin-conjugating E2 enzymes, it catalyzes the formation of protein-ubiquitin conjugates that are subsequently degraded by the 26S proteasome. Appears to play a role in spore wall formation.</text>
</comment>
<comment type="subunit">
    <text evidence="1">The APC/C is composed of at least 13 subunits: apc1, apc2, nuc2, apc4, apc5, cut9, apc8, apc10, apc11, hcn1, apc13, apc14 and apc15.</text>
</comment>
<comment type="interaction">
    <interactant intactId="EBI-1251592">
        <id>O42659</id>
    </interactant>
    <interactant intactId="EBI-1251604">
        <id>O94688</id>
        <label>apc15</label>
    </interactant>
    <organismsDiffer>false</organismsDiffer>
    <experiments>2</experiments>
</comment>
<comment type="interaction">
    <interactant intactId="EBI-1251592">
        <id>O42659</id>
    </interactant>
    <interactant intactId="EBI-1160859">
        <id>P41889</id>
        <label>cut9</label>
    </interactant>
    <organismsDiffer>false</organismsDiffer>
    <experiments>2</experiments>
</comment>
<comment type="subcellular location">
    <subcellularLocation>
        <location evidence="2">Ascus epiplasm</location>
    </subcellularLocation>
</comment>
<comment type="disruption phenotype">
    <text evidence="2">Abnormal spore wall formation (PubMed:12786945). Abnormal spore wall polysaccharide composition during sporulation (PubMed:12786945). Irregular spore wall thickness (PubMed:12786945).</text>
</comment>
<sequence>MDPFAGTGQSKSYRTFGNVFQRLSMSGNPKPLAKKPLLLPEASKAIEFWNYRDVIGGEEAEQERNERASRIAISRIASSRSSIPEYRQAIMQHLTKHVQQLDQLAEW</sequence>
<reference key="1">
    <citation type="journal article" date="2003" name="Genes Cells">
        <title>Overlapping omt1+ and omt2+ genes are required for spore wall maturation in Schizosaccharomyces pombe.</title>
        <authorList>
            <person name="Kakihara Y."/>
            <person name="Nabeshima K."/>
            <person name="Hirata A."/>
            <person name="Nojima H."/>
        </authorList>
    </citation>
    <scope>NUCLEOTIDE SEQUENCE [GENOMIC DNA]</scope>
    <scope>FUNCTION</scope>
    <scope>SUBCELLULAR LOCATION</scope>
    <scope>DISRUPTION PHENOTYPE</scope>
</reference>
<reference key="2">
    <citation type="journal article" date="2002" name="Nature">
        <title>The genome sequence of Schizosaccharomyces pombe.</title>
        <authorList>
            <person name="Wood V."/>
            <person name="Gwilliam R."/>
            <person name="Rajandream M.A."/>
            <person name="Lyne M.H."/>
            <person name="Lyne R."/>
            <person name="Stewart A."/>
            <person name="Sgouros J.G."/>
            <person name="Peat N."/>
            <person name="Hayles J."/>
            <person name="Baker S.G."/>
            <person name="Basham D."/>
            <person name="Bowman S."/>
            <person name="Brooks K."/>
            <person name="Brown D."/>
            <person name="Brown S."/>
            <person name="Chillingworth T."/>
            <person name="Churcher C.M."/>
            <person name="Collins M."/>
            <person name="Connor R."/>
            <person name="Cronin A."/>
            <person name="Davis P."/>
            <person name="Feltwell T."/>
            <person name="Fraser A."/>
            <person name="Gentles S."/>
            <person name="Goble A."/>
            <person name="Hamlin N."/>
            <person name="Harris D.E."/>
            <person name="Hidalgo J."/>
            <person name="Hodgson G."/>
            <person name="Holroyd S."/>
            <person name="Hornsby T."/>
            <person name="Howarth S."/>
            <person name="Huckle E.J."/>
            <person name="Hunt S."/>
            <person name="Jagels K."/>
            <person name="James K.D."/>
            <person name="Jones L."/>
            <person name="Jones M."/>
            <person name="Leather S."/>
            <person name="McDonald S."/>
            <person name="McLean J."/>
            <person name="Mooney P."/>
            <person name="Moule S."/>
            <person name="Mungall K.L."/>
            <person name="Murphy L.D."/>
            <person name="Niblett D."/>
            <person name="Odell C."/>
            <person name="Oliver K."/>
            <person name="O'Neil S."/>
            <person name="Pearson D."/>
            <person name="Quail M.A."/>
            <person name="Rabbinowitsch E."/>
            <person name="Rutherford K.M."/>
            <person name="Rutter S."/>
            <person name="Saunders D."/>
            <person name="Seeger K."/>
            <person name="Sharp S."/>
            <person name="Skelton J."/>
            <person name="Simmonds M.N."/>
            <person name="Squares R."/>
            <person name="Squares S."/>
            <person name="Stevens K."/>
            <person name="Taylor K."/>
            <person name="Taylor R.G."/>
            <person name="Tivey A."/>
            <person name="Walsh S.V."/>
            <person name="Warren T."/>
            <person name="Whitehead S."/>
            <person name="Woodward J.R."/>
            <person name="Volckaert G."/>
            <person name="Aert R."/>
            <person name="Robben J."/>
            <person name="Grymonprez B."/>
            <person name="Weltjens I."/>
            <person name="Vanstreels E."/>
            <person name="Rieger M."/>
            <person name="Schaefer M."/>
            <person name="Mueller-Auer S."/>
            <person name="Gabel C."/>
            <person name="Fuchs M."/>
            <person name="Duesterhoeft A."/>
            <person name="Fritzc C."/>
            <person name="Holzer E."/>
            <person name="Moestl D."/>
            <person name="Hilbert H."/>
            <person name="Borzym K."/>
            <person name="Langer I."/>
            <person name="Beck A."/>
            <person name="Lehrach H."/>
            <person name="Reinhardt R."/>
            <person name="Pohl T.M."/>
            <person name="Eger P."/>
            <person name="Zimmermann W."/>
            <person name="Wedler H."/>
            <person name="Wambutt R."/>
            <person name="Purnelle B."/>
            <person name="Goffeau A."/>
            <person name="Cadieu E."/>
            <person name="Dreano S."/>
            <person name="Gloux S."/>
            <person name="Lelaure V."/>
            <person name="Mottier S."/>
            <person name="Galibert F."/>
            <person name="Aves S.J."/>
            <person name="Xiang Z."/>
            <person name="Hunt C."/>
            <person name="Moore K."/>
            <person name="Hurst S.M."/>
            <person name="Lucas M."/>
            <person name="Rochet M."/>
            <person name="Gaillardin C."/>
            <person name="Tallada V.A."/>
            <person name="Garzon A."/>
            <person name="Thode G."/>
            <person name="Daga R.R."/>
            <person name="Cruzado L."/>
            <person name="Jimenez J."/>
            <person name="Sanchez M."/>
            <person name="del Rey F."/>
            <person name="Benito J."/>
            <person name="Dominguez A."/>
            <person name="Revuelta J.L."/>
            <person name="Moreno S."/>
            <person name="Armstrong J."/>
            <person name="Forsburg S.L."/>
            <person name="Cerutti L."/>
            <person name="Lowe T."/>
            <person name="McCombie W.R."/>
            <person name="Paulsen I."/>
            <person name="Potashkin J."/>
            <person name="Shpakovski G.V."/>
            <person name="Ussery D."/>
            <person name="Barrell B.G."/>
            <person name="Nurse P."/>
        </authorList>
    </citation>
    <scope>NUCLEOTIDE SEQUENCE [LARGE SCALE GENOMIC DNA]</scope>
    <source>
        <strain>972 / ATCC 24843</strain>
    </source>
</reference>
<reference key="3">
    <citation type="journal article" date="2002" name="Curr. Biol.">
        <title>Proteomics analysis identifies new components of the fission and budding yeast anaphase-promoting complexes.</title>
        <authorList>
            <person name="Yoon H.-J."/>
            <person name="Feoktistova A."/>
            <person name="Wolfe B.A."/>
            <person name="Jennings J.L."/>
            <person name="Link A.J."/>
            <person name="Gould K.L."/>
        </authorList>
    </citation>
    <scope>FUNCTION</scope>
    <scope>SUBUNIT</scope>
</reference>
<proteinExistence type="evidence at protein level"/>
<organism>
    <name type="scientific">Schizosaccharomyces pombe (strain 972 / ATCC 24843)</name>
    <name type="common">Fission yeast</name>
    <dbReference type="NCBI Taxonomy" id="284812"/>
    <lineage>
        <taxon>Eukaryota</taxon>
        <taxon>Fungi</taxon>
        <taxon>Dikarya</taxon>
        <taxon>Ascomycota</taxon>
        <taxon>Taphrinomycotina</taxon>
        <taxon>Schizosaccharomycetes</taxon>
        <taxon>Schizosaccharomycetales</taxon>
        <taxon>Schizosaccharomycetaceae</taxon>
        <taxon>Schizosaccharomyces</taxon>
    </lineage>
</organism>
<dbReference type="EMBL" id="CU329670">
    <property type="protein sequence ID" value="CAA15824.1"/>
    <property type="molecule type" value="Genomic_DNA"/>
</dbReference>
<dbReference type="PIR" id="T38438">
    <property type="entry name" value="T38438"/>
</dbReference>
<dbReference type="RefSeq" id="NP_594611.1">
    <property type="nucleotide sequence ID" value="NM_001020039.2"/>
</dbReference>
<dbReference type="SMR" id="O42659"/>
<dbReference type="BioGRID" id="278685">
    <property type="interactions" value="6"/>
</dbReference>
<dbReference type="ComplexPortal" id="CPX-763">
    <property type="entry name" value="Anaphase-promoting complex"/>
</dbReference>
<dbReference type="ComplexPortal" id="CPX-764">
    <property type="entry name" value="Anaphase-promoting complex, slp1 variant"/>
</dbReference>
<dbReference type="ComplexPortal" id="CPX-765">
    <property type="entry name" value="Anaphase-promoting complex, srw1 variant"/>
</dbReference>
<dbReference type="ComplexPortal" id="CPX-766">
    <property type="entry name" value="Anaphase-promoting complex, mfr1 variant"/>
</dbReference>
<dbReference type="FunCoup" id="O42659">
    <property type="interactions" value="15"/>
</dbReference>
<dbReference type="IntAct" id="O42659">
    <property type="interactions" value="4"/>
</dbReference>
<dbReference type="STRING" id="284812.O42659"/>
<dbReference type="PaxDb" id="4896-SPAC27D7.05c.1"/>
<dbReference type="EnsemblFungi" id="SPAC27D7.05c.1">
    <property type="protein sequence ID" value="SPAC27D7.05c.1:pep"/>
    <property type="gene ID" value="SPAC27D7.05c"/>
</dbReference>
<dbReference type="GeneID" id="2542211"/>
<dbReference type="KEGG" id="spo:2542211"/>
<dbReference type="PomBase" id="SPAC27D7.05c">
    <property type="gene designation" value="apc14"/>
</dbReference>
<dbReference type="VEuPathDB" id="FungiDB:SPAC27D7.05c"/>
<dbReference type="HOGENOM" id="CLU_2211479_0_0_1"/>
<dbReference type="InParanoid" id="O42659"/>
<dbReference type="OMA" id="FWNYRDI"/>
<dbReference type="PRO" id="PR:O42659"/>
<dbReference type="Proteomes" id="UP000002485">
    <property type="component" value="Chromosome I"/>
</dbReference>
<dbReference type="GO" id="GO:0005680">
    <property type="term" value="C:anaphase-promoting complex"/>
    <property type="evidence" value="ECO:0000314"/>
    <property type="project" value="PomBase"/>
</dbReference>
<dbReference type="GO" id="GO:0072324">
    <property type="term" value="C:ascus epiplasm"/>
    <property type="evidence" value="ECO:0000314"/>
    <property type="project" value="PomBase"/>
</dbReference>
<dbReference type="GO" id="GO:0005737">
    <property type="term" value="C:cytoplasm"/>
    <property type="evidence" value="ECO:0007005"/>
    <property type="project" value="PomBase"/>
</dbReference>
<dbReference type="GO" id="GO:0031145">
    <property type="term" value="P:anaphase-promoting complex-dependent catabolic process"/>
    <property type="evidence" value="ECO:0000315"/>
    <property type="project" value="PomBase"/>
</dbReference>
<dbReference type="GO" id="GO:0051301">
    <property type="term" value="P:cell division"/>
    <property type="evidence" value="ECO:0007669"/>
    <property type="project" value="UniProtKB-KW"/>
</dbReference>
<dbReference type="GO" id="GO:0051306">
    <property type="term" value="P:mitotic sister chromatid separation"/>
    <property type="evidence" value="ECO:0000305"/>
    <property type="project" value="PomBase"/>
</dbReference>
<keyword id="KW-0131">Cell cycle</keyword>
<keyword id="KW-0132">Cell division</keyword>
<keyword id="KW-0498">Mitosis</keyword>
<keyword id="KW-1185">Reference proteome</keyword>
<keyword id="KW-0833">Ubl conjugation pathway</keyword>
<accession>O42659</accession>